<feature type="chain" id="PRO_0000330423" description="HssA/B-like protein 55">
    <location>
        <begin position="1"/>
        <end position="87"/>
    </location>
</feature>
<feature type="region of interest" description="Disordered" evidence="1">
    <location>
        <begin position="1"/>
        <end position="31"/>
    </location>
</feature>
<feature type="compositionally biased region" description="Polar residues" evidence="1">
    <location>
        <begin position="1"/>
        <end position="13"/>
    </location>
</feature>
<feature type="compositionally biased region" description="Low complexity" evidence="1">
    <location>
        <begin position="14"/>
        <end position="31"/>
    </location>
</feature>
<organism>
    <name type="scientific">Dictyostelium discoideum</name>
    <name type="common">Social amoeba</name>
    <dbReference type="NCBI Taxonomy" id="44689"/>
    <lineage>
        <taxon>Eukaryota</taxon>
        <taxon>Amoebozoa</taxon>
        <taxon>Evosea</taxon>
        <taxon>Eumycetozoa</taxon>
        <taxon>Dictyostelia</taxon>
        <taxon>Dictyosteliales</taxon>
        <taxon>Dictyosteliaceae</taxon>
        <taxon>Dictyostelium</taxon>
    </lineage>
</organism>
<proteinExistence type="inferred from homology"/>
<evidence type="ECO:0000256" key="1">
    <source>
        <dbReference type="SAM" id="MobiDB-lite"/>
    </source>
</evidence>
<evidence type="ECO:0000305" key="2"/>
<sequence>MTILSAITSISRPNKSSKSVVSSNGGSSLSMGSNSVSCFNACGGGSSYSYSSSYSGSGLDYSYKANYSSSNGYNSSVVIASSTCHCS</sequence>
<comment type="similarity">
    <text evidence="2">Belongs to the hssA/B family.</text>
</comment>
<keyword id="KW-1185">Reference proteome</keyword>
<gene>
    <name type="primary">hssl55</name>
    <name type="ORF">DDB_G0282317</name>
</gene>
<accession>Q54SP8</accession>
<reference key="1">
    <citation type="journal article" date="2005" name="Nature">
        <title>The genome of the social amoeba Dictyostelium discoideum.</title>
        <authorList>
            <person name="Eichinger L."/>
            <person name="Pachebat J.A."/>
            <person name="Gloeckner G."/>
            <person name="Rajandream M.A."/>
            <person name="Sucgang R."/>
            <person name="Berriman M."/>
            <person name="Song J."/>
            <person name="Olsen R."/>
            <person name="Szafranski K."/>
            <person name="Xu Q."/>
            <person name="Tunggal B."/>
            <person name="Kummerfeld S."/>
            <person name="Madera M."/>
            <person name="Konfortov B.A."/>
            <person name="Rivero F."/>
            <person name="Bankier A.T."/>
            <person name="Lehmann R."/>
            <person name="Hamlin N."/>
            <person name="Davies R."/>
            <person name="Gaudet P."/>
            <person name="Fey P."/>
            <person name="Pilcher K."/>
            <person name="Chen G."/>
            <person name="Saunders D."/>
            <person name="Sodergren E.J."/>
            <person name="Davis P."/>
            <person name="Kerhornou A."/>
            <person name="Nie X."/>
            <person name="Hall N."/>
            <person name="Anjard C."/>
            <person name="Hemphill L."/>
            <person name="Bason N."/>
            <person name="Farbrother P."/>
            <person name="Desany B."/>
            <person name="Just E."/>
            <person name="Morio T."/>
            <person name="Rost R."/>
            <person name="Churcher C.M."/>
            <person name="Cooper J."/>
            <person name="Haydock S."/>
            <person name="van Driessche N."/>
            <person name="Cronin A."/>
            <person name="Goodhead I."/>
            <person name="Muzny D.M."/>
            <person name="Mourier T."/>
            <person name="Pain A."/>
            <person name="Lu M."/>
            <person name="Harper D."/>
            <person name="Lindsay R."/>
            <person name="Hauser H."/>
            <person name="James K.D."/>
            <person name="Quiles M."/>
            <person name="Madan Babu M."/>
            <person name="Saito T."/>
            <person name="Buchrieser C."/>
            <person name="Wardroper A."/>
            <person name="Felder M."/>
            <person name="Thangavelu M."/>
            <person name="Johnson D."/>
            <person name="Knights A."/>
            <person name="Loulseged H."/>
            <person name="Mungall K.L."/>
            <person name="Oliver K."/>
            <person name="Price C."/>
            <person name="Quail M.A."/>
            <person name="Urushihara H."/>
            <person name="Hernandez J."/>
            <person name="Rabbinowitsch E."/>
            <person name="Steffen D."/>
            <person name="Sanders M."/>
            <person name="Ma J."/>
            <person name="Kohara Y."/>
            <person name="Sharp S."/>
            <person name="Simmonds M.N."/>
            <person name="Spiegler S."/>
            <person name="Tivey A."/>
            <person name="Sugano S."/>
            <person name="White B."/>
            <person name="Walker D."/>
            <person name="Woodward J.R."/>
            <person name="Winckler T."/>
            <person name="Tanaka Y."/>
            <person name="Shaulsky G."/>
            <person name="Schleicher M."/>
            <person name="Weinstock G.M."/>
            <person name="Rosenthal A."/>
            <person name="Cox E.C."/>
            <person name="Chisholm R.L."/>
            <person name="Gibbs R.A."/>
            <person name="Loomis W.F."/>
            <person name="Platzer M."/>
            <person name="Kay R.R."/>
            <person name="Williams J.G."/>
            <person name="Dear P.H."/>
            <person name="Noegel A.A."/>
            <person name="Barrell B.G."/>
            <person name="Kuspa A."/>
        </authorList>
    </citation>
    <scope>NUCLEOTIDE SEQUENCE [LARGE SCALE GENOMIC DNA]</scope>
    <source>
        <strain>AX4</strain>
    </source>
</reference>
<dbReference type="EMBL" id="AAFI02000047">
    <property type="protein sequence ID" value="EAL66280.1"/>
    <property type="molecule type" value="Genomic_DNA"/>
</dbReference>
<dbReference type="RefSeq" id="XP_640253.1">
    <property type="nucleotide sequence ID" value="XM_635161.1"/>
</dbReference>
<dbReference type="FunCoup" id="Q54SP8">
    <property type="interactions" value="243"/>
</dbReference>
<dbReference type="PaxDb" id="44689-DDB0232103"/>
<dbReference type="EnsemblProtists" id="EAL66280">
    <property type="protein sequence ID" value="EAL66280"/>
    <property type="gene ID" value="DDB_G0282317"/>
</dbReference>
<dbReference type="GeneID" id="8623512"/>
<dbReference type="KEGG" id="ddi:DDB_G0282317"/>
<dbReference type="dictyBase" id="DDB_G0282317"/>
<dbReference type="HOGENOM" id="CLU_181850_1_0_1"/>
<dbReference type="InParanoid" id="Q54SP8"/>
<dbReference type="PRO" id="PR:Q54SP8"/>
<dbReference type="Proteomes" id="UP000002195">
    <property type="component" value="Chromosome 3"/>
</dbReference>
<dbReference type="GO" id="GO:0030587">
    <property type="term" value="P:sorocarp development"/>
    <property type="evidence" value="ECO:0000318"/>
    <property type="project" value="GO_Central"/>
</dbReference>
<dbReference type="InterPro" id="IPR050533">
    <property type="entry name" value="HssA/B-like_chaperone"/>
</dbReference>
<dbReference type="InterPro" id="IPR008455">
    <property type="entry name" value="HssA/B-related"/>
</dbReference>
<dbReference type="PANTHER" id="PTHR31059">
    <property type="entry name" value="HSSA/B-LIKE PROTEIN 1-RELATED-RELATED"/>
    <property type="match status" value="1"/>
</dbReference>
<dbReference type="PANTHER" id="PTHR31059:SF5">
    <property type="entry name" value="HSSA_B-LIKE PROTEIN 1-RELATED"/>
    <property type="match status" value="1"/>
</dbReference>
<dbReference type="Pfam" id="PF05710">
    <property type="entry name" value="Coiled"/>
    <property type="match status" value="1"/>
</dbReference>
<protein>
    <recommendedName>
        <fullName>HssA/B-like protein 55</fullName>
    </recommendedName>
</protein>
<name>HSL55_DICDI</name>